<gene>
    <name evidence="1" type="primary">accD</name>
    <name type="ordered locus">BCG9842_B0526</name>
</gene>
<sequence length="289" mass="32153">MLRDLFVKKKKYAAIPSEQVRKDVPDGVMTKCPECKKIMYTKELLKNLKVCVNCGYHHPMNAWERLDSILDEGSFREYDKEMVSLNPLEFPGYEEKLESDRKKTELNEAVVTGEGTIDDMLVVVAVMDSRFRMGSMGSVVGEKIARAVEKAYDLQVPFIIFTASGGARMQEGILSLMQMAKTSVALKKHSNAGGLFISVMTHPTTGGVSASFASLGDYNLAEPGALIGFAGRRVIEQTVREKLPEDFQTAEFLLDHGQLDAVVHRDDMRESLRKILEVHQGGGMAVWQS</sequence>
<keyword id="KW-0067">ATP-binding</keyword>
<keyword id="KW-0963">Cytoplasm</keyword>
<keyword id="KW-0275">Fatty acid biosynthesis</keyword>
<keyword id="KW-0276">Fatty acid metabolism</keyword>
<keyword id="KW-0444">Lipid biosynthesis</keyword>
<keyword id="KW-0443">Lipid metabolism</keyword>
<keyword id="KW-0479">Metal-binding</keyword>
<keyword id="KW-0547">Nucleotide-binding</keyword>
<keyword id="KW-0808">Transferase</keyword>
<keyword id="KW-0862">Zinc</keyword>
<keyword id="KW-0863">Zinc-finger</keyword>
<proteinExistence type="inferred from homology"/>
<dbReference type="EC" id="2.1.3.15" evidence="1"/>
<dbReference type="EMBL" id="CP001186">
    <property type="protein sequence ID" value="ACK97364.1"/>
    <property type="molecule type" value="Genomic_DNA"/>
</dbReference>
<dbReference type="RefSeq" id="WP_000942858.1">
    <property type="nucleotide sequence ID" value="NC_011772.1"/>
</dbReference>
<dbReference type="SMR" id="B7IK00"/>
<dbReference type="KEGG" id="bcg:BCG9842_B0526"/>
<dbReference type="HOGENOM" id="CLU_015486_1_1_9"/>
<dbReference type="UniPathway" id="UPA00655">
    <property type="reaction ID" value="UER00711"/>
</dbReference>
<dbReference type="Proteomes" id="UP000006744">
    <property type="component" value="Chromosome"/>
</dbReference>
<dbReference type="GO" id="GO:0009317">
    <property type="term" value="C:acetyl-CoA carboxylase complex"/>
    <property type="evidence" value="ECO:0007669"/>
    <property type="project" value="InterPro"/>
</dbReference>
<dbReference type="GO" id="GO:0003989">
    <property type="term" value="F:acetyl-CoA carboxylase activity"/>
    <property type="evidence" value="ECO:0007669"/>
    <property type="project" value="InterPro"/>
</dbReference>
<dbReference type="GO" id="GO:0005524">
    <property type="term" value="F:ATP binding"/>
    <property type="evidence" value="ECO:0007669"/>
    <property type="project" value="UniProtKB-KW"/>
</dbReference>
<dbReference type="GO" id="GO:0016743">
    <property type="term" value="F:carboxyl- or carbamoyltransferase activity"/>
    <property type="evidence" value="ECO:0007669"/>
    <property type="project" value="UniProtKB-UniRule"/>
</dbReference>
<dbReference type="GO" id="GO:0008270">
    <property type="term" value="F:zinc ion binding"/>
    <property type="evidence" value="ECO:0007669"/>
    <property type="project" value="UniProtKB-UniRule"/>
</dbReference>
<dbReference type="GO" id="GO:0006633">
    <property type="term" value="P:fatty acid biosynthetic process"/>
    <property type="evidence" value="ECO:0007669"/>
    <property type="project" value="UniProtKB-KW"/>
</dbReference>
<dbReference type="GO" id="GO:2001295">
    <property type="term" value="P:malonyl-CoA biosynthetic process"/>
    <property type="evidence" value="ECO:0007669"/>
    <property type="project" value="UniProtKB-UniRule"/>
</dbReference>
<dbReference type="Gene3D" id="3.90.226.10">
    <property type="entry name" value="2-enoyl-CoA Hydratase, Chain A, domain 1"/>
    <property type="match status" value="1"/>
</dbReference>
<dbReference type="HAMAP" id="MF_01395">
    <property type="entry name" value="AcetylCoA_CT_beta"/>
    <property type="match status" value="1"/>
</dbReference>
<dbReference type="InterPro" id="IPR034733">
    <property type="entry name" value="AcCoA_carboxyl_beta"/>
</dbReference>
<dbReference type="InterPro" id="IPR000438">
    <property type="entry name" value="Acetyl_CoA_COase_Trfase_b_su"/>
</dbReference>
<dbReference type="InterPro" id="IPR029045">
    <property type="entry name" value="ClpP/crotonase-like_dom_sf"/>
</dbReference>
<dbReference type="InterPro" id="IPR011762">
    <property type="entry name" value="COA_CT_N"/>
</dbReference>
<dbReference type="InterPro" id="IPR041010">
    <property type="entry name" value="Znf-ACC"/>
</dbReference>
<dbReference type="NCBIfam" id="TIGR00515">
    <property type="entry name" value="accD"/>
    <property type="match status" value="1"/>
</dbReference>
<dbReference type="PANTHER" id="PTHR42995">
    <property type="entry name" value="ACETYL-COENZYME A CARBOXYLASE CARBOXYL TRANSFERASE SUBUNIT BETA, CHLOROPLASTIC"/>
    <property type="match status" value="1"/>
</dbReference>
<dbReference type="PANTHER" id="PTHR42995:SF5">
    <property type="entry name" value="ACETYL-COENZYME A CARBOXYLASE CARBOXYL TRANSFERASE SUBUNIT BETA, CHLOROPLASTIC"/>
    <property type="match status" value="1"/>
</dbReference>
<dbReference type="Pfam" id="PF01039">
    <property type="entry name" value="Carboxyl_trans"/>
    <property type="match status" value="1"/>
</dbReference>
<dbReference type="Pfam" id="PF17848">
    <property type="entry name" value="Zn_ribbon_ACC"/>
    <property type="match status" value="1"/>
</dbReference>
<dbReference type="PRINTS" id="PR01070">
    <property type="entry name" value="ACCCTRFRASEB"/>
</dbReference>
<dbReference type="SUPFAM" id="SSF52096">
    <property type="entry name" value="ClpP/crotonase"/>
    <property type="match status" value="1"/>
</dbReference>
<dbReference type="PROSITE" id="PS50980">
    <property type="entry name" value="COA_CT_NTER"/>
    <property type="match status" value="1"/>
</dbReference>
<comment type="function">
    <text evidence="1">Component of the acetyl coenzyme A carboxylase (ACC) complex. Biotin carboxylase (BC) catalyzes the carboxylation of biotin on its carrier protein (BCCP) and then the CO(2) group is transferred by the transcarboxylase to acetyl-CoA to form malonyl-CoA.</text>
</comment>
<comment type="catalytic activity">
    <reaction evidence="1">
        <text>N(6)-carboxybiotinyl-L-lysyl-[protein] + acetyl-CoA = N(6)-biotinyl-L-lysyl-[protein] + malonyl-CoA</text>
        <dbReference type="Rhea" id="RHEA:54728"/>
        <dbReference type="Rhea" id="RHEA-COMP:10505"/>
        <dbReference type="Rhea" id="RHEA-COMP:10506"/>
        <dbReference type="ChEBI" id="CHEBI:57288"/>
        <dbReference type="ChEBI" id="CHEBI:57384"/>
        <dbReference type="ChEBI" id="CHEBI:83144"/>
        <dbReference type="ChEBI" id="CHEBI:83145"/>
        <dbReference type="EC" id="2.1.3.15"/>
    </reaction>
</comment>
<comment type="cofactor">
    <cofactor evidence="1">
        <name>Zn(2+)</name>
        <dbReference type="ChEBI" id="CHEBI:29105"/>
    </cofactor>
    <text evidence="1">Binds 1 zinc ion per subunit.</text>
</comment>
<comment type="pathway">
    <text evidence="1">Lipid metabolism; malonyl-CoA biosynthesis; malonyl-CoA from acetyl-CoA: step 1/1.</text>
</comment>
<comment type="subunit">
    <text evidence="1">Acetyl-CoA carboxylase is a heterohexamer composed of biotin carboxyl carrier protein (AccB), biotin carboxylase (AccC) and two subunits each of ACCase subunit alpha (AccA) and ACCase subunit beta (AccD).</text>
</comment>
<comment type="subcellular location">
    <subcellularLocation>
        <location evidence="1">Cytoplasm</location>
    </subcellularLocation>
</comment>
<comment type="similarity">
    <text evidence="1">Belongs to the AccD/PCCB family.</text>
</comment>
<evidence type="ECO:0000255" key="1">
    <source>
        <dbReference type="HAMAP-Rule" id="MF_01395"/>
    </source>
</evidence>
<evidence type="ECO:0000255" key="2">
    <source>
        <dbReference type="PROSITE-ProRule" id="PRU01136"/>
    </source>
</evidence>
<reference key="1">
    <citation type="submission" date="2008-10" db="EMBL/GenBank/DDBJ databases">
        <title>Genome sequence of Bacillus cereus G9842.</title>
        <authorList>
            <person name="Dodson R.J."/>
            <person name="Durkin A.S."/>
            <person name="Rosovitz M.J."/>
            <person name="Rasko D.A."/>
            <person name="Hoffmaster A."/>
            <person name="Ravel J."/>
            <person name="Sutton G."/>
        </authorList>
    </citation>
    <scope>NUCLEOTIDE SEQUENCE [LARGE SCALE GENOMIC DNA]</scope>
    <source>
        <strain>G9842</strain>
    </source>
</reference>
<name>ACCD_BACC2</name>
<accession>B7IK00</accession>
<feature type="chain" id="PRO_0000389678" description="Acetyl-coenzyme A carboxylase carboxyl transferase subunit beta">
    <location>
        <begin position="1"/>
        <end position="289"/>
    </location>
</feature>
<feature type="domain" description="CoA carboxyltransferase N-terminal" evidence="2">
    <location>
        <begin position="28"/>
        <end position="289"/>
    </location>
</feature>
<feature type="zinc finger region" description="C4-type" evidence="1">
    <location>
        <begin position="32"/>
        <end position="54"/>
    </location>
</feature>
<feature type="binding site" evidence="1">
    <location>
        <position position="32"/>
    </location>
    <ligand>
        <name>Zn(2+)</name>
        <dbReference type="ChEBI" id="CHEBI:29105"/>
    </ligand>
</feature>
<feature type="binding site" evidence="1">
    <location>
        <position position="35"/>
    </location>
    <ligand>
        <name>Zn(2+)</name>
        <dbReference type="ChEBI" id="CHEBI:29105"/>
    </ligand>
</feature>
<feature type="binding site" evidence="1">
    <location>
        <position position="51"/>
    </location>
    <ligand>
        <name>Zn(2+)</name>
        <dbReference type="ChEBI" id="CHEBI:29105"/>
    </ligand>
</feature>
<feature type="binding site" evidence="1">
    <location>
        <position position="54"/>
    </location>
    <ligand>
        <name>Zn(2+)</name>
        <dbReference type="ChEBI" id="CHEBI:29105"/>
    </ligand>
</feature>
<organism>
    <name type="scientific">Bacillus cereus (strain G9842)</name>
    <dbReference type="NCBI Taxonomy" id="405531"/>
    <lineage>
        <taxon>Bacteria</taxon>
        <taxon>Bacillati</taxon>
        <taxon>Bacillota</taxon>
        <taxon>Bacilli</taxon>
        <taxon>Bacillales</taxon>
        <taxon>Bacillaceae</taxon>
        <taxon>Bacillus</taxon>
        <taxon>Bacillus cereus group</taxon>
    </lineage>
</organism>
<protein>
    <recommendedName>
        <fullName evidence="1">Acetyl-coenzyme A carboxylase carboxyl transferase subunit beta</fullName>
        <shortName evidence="1">ACCase subunit beta</shortName>
        <shortName evidence="1">Acetyl-CoA carboxylase carboxyltransferase subunit beta</shortName>
        <ecNumber evidence="1">2.1.3.15</ecNumber>
    </recommendedName>
</protein>